<gene>
    <name evidence="1" type="primary">lipA</name>
    <name type="ordered locus">BAbS19_I10650</name>
</gene>
<dbReference type="EC" id="2.8.1.8" evidence="1"/>
<dbReference type="EMBL" id="CP000887">
    <property type="protein sequence ID" value="ACD72572.1"/>
    <property type="molecule type" value="Genomic_DNA"/>
</dbReference>
<dbReference type="RefSeq" id="WP_002964253.1">
    <property type="nucleotide sequence ID" value="NC_010742.1"/>
</dbReference>
<dbReference type="SMR" id="B2S5X5"/>
<dbReference type="GeneID" id="97533623"/>
<dbReference type="KEGG" id="bmc:BAbS19_I10650"/>
<dbReference type="HOGENOM" id="CLU_033144_2_1_5"/>
<dbReference type="UniPathway" id="UPA00538">
    <property type="reaction ID" value="UER00593"/>
</dbReference>
<dbReference type="Proteomes" id="UP000002565">
    <property type="component" value="Chromosome 1"/>
</dbReference>
<dbReference type="GO" id="GO:0005737">
    <property type="term" value="C:cytoplasm"/>
    <property type="evidence" value="ECO:0007669"/>
    <property type="project" value="UniProtKB-SubCell"/>
</dbReference>
<dbReference type="GO" id="GO:0051539">
    <property type="term" value="F:4 iron, 4 sulfur cluster binding"/>
    <property type="evidence" value="ECO:0007669"/>
    <property type="project" value="UniProtKB-UniRule"/>
</dbReference>
<dbReference type="GO" id="GO:0016992">
    <property type="term" value="F:lipoate synthase activity"/>
    <property type="evidence" value="ECO:0007669"/>
    <property type="project" value="UniProtKB-UniRule"/>
</dbReference>
<dbReference type="GO" id="GO:0046872">
    <property type="term" value="F:metal ion binding"/>
    <property type="evidence" value="ECO:0007669"/>
    <property type="project" value="UniProtKB-KW"/>
</dbReference>
<dbReference type="CDD" id="cd01335">
    <property type="entry name" value="Radical_SAM"/>
    <property type="match status" value="1"/>
</dbReference>
<dbReference type="FunFam" id="3.20.20.70:FF:000040">
    <property type="entry name" value="Lipoyl synthase"/>
    <property type="match status" value="1"/>
</dbReference>
<dbReference type="Gene3D" id="3.20.20.70">
    <property type="entry name" value="Aldolase class I"/>
    <property type="match status" value="1"/>
</dbReference>
<dbReference type="HAMAP" id="MF_00206">
    <property type="entry name" value="Lipoyl_synth"/>
    <property type="match status" value="1"/>
</dbReference>
<dbReference type="InterPro" id="IPR013785">
    <property type="entry name" value="Aldolase_TIM"/>
</dbReference>
<dbReference type="InterPro" id="IPR006638">
    <property type="entry name" value="Elp3/MiaA/NifB-like_rSAM"/>
</dbReference>
<dbReference type="InterPro" id="IPR031691">
    <property type="entry name" value="LIAS_N"/>
</dbReference>
<dbReference type="InterPro" id="IPR003698">
    <property type="entry name" value="Lipoyl_synth"/>
</dbReference>
<dbReference type="InterPro" id="IPR007197">
    <property type="entry name" value="rSAM"/>
</dbReference>
<dbReference type="NCBIfam" id="TIGR00510">
    <property type="entry name" value="lipA"/>
    <property type="match status" value="1"/>
</dbReference>
<dbReference type="NCBIfam" id="NF004019">
    <property type="entry name" value="PRK05481.1"/>
    <property type="match status" value="1"/>
</dbReference>
<dbReference type="NCBIfam" id="NF009544">
    <property type="entry name" value="PRK12928.1"/>
    <property type="match status" value="1"/>
</dbReference>
<dbReference type="PANTHER" id="PTHR10949">
    <property type="entry name" value="LIPOYL SYNTHASE"/>
    <property type="match status" value="1"/>
</dbReference>
<dbReference type="PANTHER" id="PTHR10949:SF0">
    <property type="entry name" value="LIPOYL SYNTHASE, MITOCHONDRIAL"/>
    <property type="match status" value="1"/>
</dbReference>
<dbReference type="Pfam" id="PF16881">
    <property type="entry name" value="LIAS_N"/>
    <property type="match status" value="1"/>
</dbReference>
<dbReference type="Pfam" id="PF04055">
    <property type="entry name" value="Radical_SAM"/>
    <property type="match status" value="1"/>
</dbReference>
<dbReference type="PIRSF" id="PIRSF005963">
    <property type="entry name" value="Lipoyl_synth"/>
    <property type="match status" value="1"/>
</dbReference>
<dbReference type="SFLD" id="SFLDF00271">
    <property type="entry name" value="lipoyl_synthase"/>
    <property type="match status" value="1"/>
</dbReference>
<dbReference type="SFLD" id="SFLDG01058">
    <property type="entry name" value="lipoyl_synthase_like"/>
    <property type="match status" value="1"/>
</dbReference>
<dbReference type="SMART" id="SM00729">
    <property type="entry name" value="Elp3"/>
    <property type="match status" value="1"/>
</dbReference>
<dbReference type="SUPFAM" id="SSF102114">
    <property type="entry name" value="Radical SAM enzymes"/>
    <property type="match status" value="1"/>
</dbReference>
<dbReference type="PROSITE" id="PS51918">
    <property type="entry name" value="RADICAL_SAM"/>
    <property type="match status" value="1"/>
</dbReference>
<evidence type="ECO:0000255" key="1">
    <source>
        <dbReference type="HAMAP-Rule" id="MF_00206"/>
    </source>
</evidence>
<evidence type="ECO:0000255" key="2">
    <source>
        <dbReference type="PROSITE-ProRule" id="PRU01266"/>
    </source>
</evidence>
<evidence type="ECO:0000256" key="3">
    <source>
        <dbReference type="SAM" id="MobiDB-lite"/>
    </source>
</evidence>
<sequence>MVTVLNTVNQSGRLRHPEKAHRPDNEVLKKPDWIRVKAPVSRGYGETREIVRSNKLVTVCEEAGCPNIGECWEKKHATFMIMGEICTRACAFCNISTGIPNALDPNEPENIAKAVKQMGLTHVVITSVDRDDLADGGAHHFAEVIKAVREAAPATTIEILTPDFLRKEGALEIVVKARPDVFNHNLETVPSKYLKVRPGARYFHSIRLLQRVKELDPTIFTKSGIMVGLGEERNEILQLMDDLRSADVDFMTIGQYLQPTRKHHPVIRFVKPDEFKSFETIGKTKGFLLVASSPLTRSSHHAGEDFAKLKAAREALYASRAS</sequence>
<organism>
    <name type="scientific">Brucella abortus (strain S19)</name>
    <dbReference type="NCBI Taxonomy" id="430066"/>
    <lineage>
        <taxon>Bacteria</taxon>
        <taxon>Pseudomonadati</taxon>
        <taxon>Pseudomonadota</taxon>
        <taxon>Alphaproteobacteria</taxon>
        <taxon>Hyphomicrobiales</taxon>
        <taxon>Brucellaceae</taxon>
        <taxon>Brucella/Ochrobactrum group</taxon>
        <taxon>Brucella</taxon>
    </lineage>
</organism>
<keyword id="KW-0004">4Fe-4S</keyword>
<keyword id="KW-0963">Cytoplasm</keyword>
<keyword id="KW-0408">Iron</keyword>
<keyword id="KW-0411">Iron-sulfur</keyword>
<keyword id="KW-0479">Metal-binding</keyword>
<keyword id="KW-0949">S-adenosyl-L-methionine</keyword>
<keyword id="KW-0808">Transferase</keyword>
<comment type="function">
    <text evidence="1">Catalyzes the radical-mediated insertion of two sulfur atoms into the C-6 and C-8 positions of the octanoyl moiety bound to the lipoyl domains of lipoate-dependent enzymes, thereby converting the octanoylated domains into lipoylated derivatives.</text>
</comment>
<comment type="catalytic activity">
    <reaction evidence="1">
        <text>[[Fe-S] cluster scaffold protein carrying a second [4Fe-4S](2+) cluster] + N(6)-octanoyl-L-lysyl-[protein] + 2 oxidized [2Fe-2S]-[ferredoxin] + 2 S-adenosyl-L-methionine + 4 H(+) = [[Fe-S] cluster scaffold protein] + N(6)-[(R)-dihydrolipoyl]-L-lysyl-[protein] + 4 Fe(3+) + 2 hydrogen sulfide + 2 5'-deoxyadenosine + 2 L-methionine + 2 reduced [2Fe-2S]-[ferredoxin]</text>
        <dbReference type="Rhea" id="RHEA:16585"/>
        <dbReference type="Rhea" id="RHEA-COMP:9928"/>
        <dbReference type="Rhea" id="RHEA-COMP:10000"/>
        <dbReference type="Rhea" id="RHEA-COMP:10001"/>
        <dbReference type="Rhea" id="RHEA-COMP:10475"/>
        <dbReference type="Rhea" id="RHEA-COMP:14568"/>
        <dbReference type="Rhea" id="RHEA-COMP:14569"/>
        <dbReference type="ChEBI" id="CHEBI:15378"/>
        <dbReference type="ChEBI" id="CHEBI:17319"/>
        <dbReference type="ChEBI" id="CHEBI:29034"/>
        <dbReference type="ChEBI" id="CHEBI:29919"/>
        <dbReference type="ChEBI" id="CHEBI:33722"/>
        <dbReference type="ChEBI" id="CHEBI:33737"/>
        <dbReference type="ChEBI" id="CHEBI:33738"/>
        <dbReference type="ChEBI" id="CHEBI:57844"/>
        <dbReference type="ChEBI" id="CHEBI:59789"/>
        <dbReference type="ChEBI" id="CHEBI:78809"/>
        <dbReference type="ChEBI" id="CHEBI:83100"/>
        <dbReference type="EC" id="2.8.1.8"/>
    </reaction>
</comment>
<comment type="cofactor">
    <cofactor evidence="1">
        <name>[4Fe-4S] cluster</name>
        <dbReference type="ChEBI" id="CHEBI:49883"/>
    </cofactor>
    <text evidence="1">Binds 2 [4Fe-4S] clusters per subunit. One cluster is coordinated with 3 cysteines and an exchangeable S-adenosyl-L-methionine.</text>
</comment>
<comment type="pathway">
    <text evidence="1">Protein modification; protein lipoylation via endogenous pathway; protein N(6)-(lipoyl)lysine from octanoyl-[acyl-carrier-protein]: step 2/2.</text>
</comment>
<comment type="subcellular location">
    <subcellularLocation>
        <location evidence="1">Cytoplasm</location>
    </subcellularLocation>
</comment>
<comment type="similarity">
    <text evidence="1">Belongs to the radical SAM superfamily. Lipoyl synthase family.</text>
</comment>
<reference key="1">
    <citation type="journal article" date="2008" name="PLoS ONE">
        <title>Genome sequence of Brucella abortus vaccine strain S19 compared to virulent strains yields candidate virulence genes.</title>
        <authorList>
            <person name="Crasta O.R."/>
            <person name="Folkerts O."/>
            <person name="Fei Z."/>
            <person name="Mane S.P."/>
            <person name="Evans C."/>
            <person name="Martino-Catt S."/>
            <person name="Bricker B."/>
            <person name="Yu G."/>
            <person name="Du L."/>
            <person name="Sobral B.W."/>
        </authorList>
    </citation>
    <scope>NUCLEOTIDE SEQUENCE [LARGE SCALE GENOMIC DNA]</scope>
    <source>
        <strain>S19</strain>
    </source>
</reference>
<proteinExistence type="inferred from homology"/>
<name>LIPA_BRUA1</name>
<feature type="chain" id="PRO_1000099591" description="Lipoyl synthase">
    <location>
        <begin position="1"/>
        <end position="322"/>
    </location>
</feature>
<feature type="domain" description="Radical SAM core" evidence="2">
    <location>
        <begin position="72"/>
        <end position="288"/>
    </location>
</feature>
<feature type="region of interest" description="Disordered" evidence="3">
    <location>
        <begin position="1"/>
        <end position="22"/>
    </location>
</feature>
<feature type="compositionally biased region" description="Polar residues" evidence="3">
    <location>
        <begin position="1"/>
        <end position="12"/>
    </location>
</feature>
<feature type="binding site" evidence="1">
    <location>
        <position position="60"/>
    </location>
    <ligand>
        <name>[4Fe-4S] cluster</name>
        <dbReference type="ChEBI" id="CHEBI:49883"/>
        <label>1</label>
    </ligand>
</feature>
<feature type="binding site" evidence="1">
    <location>
        <position position="65"/>
    </location>
    <ligand>
        <name>[4Fe-4S] cluster</name>
        <dbReference type="ChEBI" id="CHEBI:49883"/>
        <label>1</label>
    </ligand>
</feature>
<feature type="binding site" evidence="1">
    <location>
        <position position="71"/>
    </location>
    <ligand>
        <name>[4Fe-4S] cluster</name>
        <dbReference type="ChEBI" id="CHEBI:49883"/>
        <label>1</label>
    </ligand>
</feature>
<feature type="binding site" evidence="1">
    <location>
        <position position="86"/>
    </location>
    <ligand>
        <name>[4Fe-4S] cluster</name>
        <dbReference type="ChEBI" id="CHEBI:49883"/>
        <label>2</label>
        <note>4Fe-4S-S-AdoMet</note>
    </ligand>
</feature>
<feature type="binding site" evidence="1">
    <location>
        <position position="90"/>
    </location>
    <ligand>
        <name>[4Fe-4S] cluster</name>
        <dbReference type="ChEBI" id="CHEBI:49883"/>
        <label>2</label>
        <note>4Fe-4S-S-AdoMet</note>
    </ligand>
</feature>
<feature type="binding site" evidence="1">
    <location>
        <position position="93"/>
    </location>
    <ligand>
        <name>[4Fe-4S] cluster</name>
        <dbReference type="ChEBI" id="CHEBI:49883"/>
        <label>2</label>
        <note>4Fe-4S-S-AdoMet</note>
    </ligand>
</feature>
<feature type="binding site" evidence="1">
    <location>
        <position position="299"/>
    </location>
    <ligand>
        <name>[4Fe-4S] cluster</name>
        <dbReference type="ChEBI" id="CHEBI:49883"/>
        <label>1</label>
    </ligand>
</feature>
<protein>
    <recommendedName>
        <fullName evidence="1">Lipoyl synthase</fullName>
        <ecNumber evidence="1">2.8.1.8</ecNumber>
    </recommendedName>
    <alternativeName>
        <fullName evidence="1">Lip-syn</fullName>
        <shortName evidence="1">LS</shortName>
    </alternativeName>
    <alternativeName>
        <fullName evidence="1">Lipoate synthase</fullName>
    </alternativeName>
    <alternativeName>
        <fullName evidence="1">Lipoic acid synthase</fullName>
    </alternativeName>
    <alternativeName>
        <fullName evidence="1">Sulfur insertion protein LipA</fullName>
    </alternativeName>
</protein>
<accession>B2S5X5</accession>